<feature type="chain" id="PRO_0000198024" description="Major outer membrane protein">
    <location>
        <begin position="1"/>
        <end position="21" status="greater than"/>
    </location>
</feature>
<feature type="non-terminal residue" evidence="3">
    <location>
        <position position="21"/>
    </location>
</feature>
<organism evidence="4">
    <name type="scientific">Actinobacillus equuli</name>
    <dbReference type="NCBI Taxonomy" id="718"/>
    <lineage>
        <taxon>Bacteria</taxon>
        <taxon>Pseudomonadati</taxon>
        <taxon>Pseudomonadota</taxon>
        <taxon>Gammaproteobacteria</taxon>
        <taxon>Pasteurellales</taxon>
        <taxon>Pasteurellaceae</taxon>
        <taxon>Actinobacillus</taxon>
    </lineage>
</organism>
<name>OMP1_ACTEU</name>
<keyword id="KW-0998">Cell outer membrane</keyword>
<keyword id="KW-0903">Direct protein sequencing</keyword>
<keyword id="KW-1015">Disulfide bond</keyword>
<keyword id="KW-0406">Ion transport</keyword>
<keyword id="KW-0472">Membrane</keyword>
<keyword id="KW-0626">Porin</keyword>
<keyword id="KW-0812">Transmembrane</keyword>
<keyword id="KW-1134">Transmembrane beta strand</keyword>
<keyword id="KW-0813">Transport</keyword>
<comment type="function">
    <text evidence="1">Structural rigidity of the outer membrane of elementary bodies and porin forming, permitting diffusion of solutes through the intracellular reticulate body membrane.</text>
</comment>
<comment type="subunit">
    <text evidence="1">Disulfide bond interactions within and between MOMP molecules and other components form high molecular-weight oligomers.</text>
</comment>
<comment type="subcellular location">
    <subcellularLocation>
        <location evidence="2">Cell outer membrane</location>
        <topology evidence="2">Multi-pass membrane protein</topology>
    </subcellularLocation>
</comment>
<proteinExistence type="evidence at protein level"/>
<sequence length="21" mass="2295">VTVYDAEGTKVQLDGSIRLVM</sequence>
<evidence type="ECO:0000250" key="1">
    <source>
        <dbReference type="UniProtKB" id="P80368"/>
    </source>
</evidence>
<evidence type="ECO:0000269" key="2">
    <source>
    </source>
</evidence>
<evidence type="ECO:0000303" key="3">
    <source>
    </source>
</evidence>
<evidence type="ECO:0000305" key="4"/>
<reference evidence="4" key="1">
    <citation type="journal article" date="1996" name="Zentralbl. Bakteriol.">
        <title>Serological and biochemical properties of the major outer membrane protein within strains of the genus Actinobacillus.</title>
        <authorList>
            <person name="Hartmann L."/>
            <person name="Schroeder W."/>
            <person name="Luebke-Becker A."/>
        </authorList>
    </citation>
    <scope>PROTEIN SEQUENCE</scope>
    <scope>SUBCELLULAR LOCATION</scope>
    <source>
        <strain evidence="2">C1 335</strain>
    </source>
</reference>
<accession>P80443</accession>
<protein>
    <recommendedName>
        <fullName>Major outer membrane protein</fullName>
        <shortName>MOMP</shortName>
    </recommendedName>
</protein>
<dbReference type="STRING" id="202947.ACEE_03780"/>
<dbReference type="GO" id="GO:0009279">
    <property type="term" value="C:cell outer membrane"/>
    <property type="evidence" value="ECO:0007669"/>
    <property type="project" value="UniProtKB-SubCell"/>
</dbReference>
<dbReference type="GO" id="GO:0046930">
    <property type="term" value="C:pore complex"/>
    <property type="evidence" value="ECO:0007669"/>
    <property type="project" value="UniProtKB-KW"/>
</dbReference>
<dbReference type="GO" id="GO:0015288">
    <property type="term" value="F:porin activity"/>
    <property type="evidence" value="ECO:0007669"/>
    <property type="project" value="UniProtKB-KW"/>
</dbReference>
<dbReference type="GO" id="GO:0006811">
    <property type="term" value="P:monoatomic ion transport"/>
    <property type="evidence" value="ECO:0007669"/>
    <property type="project" value="UniProtKB-KW"/>
</dbReference>